<gene>
    <name evidence="1" type="primary">nuoA1</name>
    <name type="ordered locus">PA1883</name>
</gene>
<protein>
    <recommendedName>
        <fullName evidence="1">NADH-quinone oxidoreductase subunit A 1</fullName>
        <ecNumber evidence="1">7.1.1.-</ecNumber>
    </recommendedName>
    <alternativeName>
        <fullName evidence="1">NADH dehydrogenase I subunit A 1</fullName>
    </alternativeName>
    <alternativeName>
        <fullName evidence="1">NDH-1 subunit A 1</fullName>
    </alternativeName>
    <alternativeName>
        <fullName evidence="1">NUO1 1</fullName>
    </alternativeName>
</protein>
<name>NUOA1_PSEAE</name>
<feature type="chain" id="PRO_0000362733" description="NADH-quinone oxidoreductase subunit A 1">
    <location>
        <begin position="1"/>
        <end position="132"/>
    </location>
</feature>
<feature type="transmembrane region" description="Helical" evidence="1">
    <location>
        <begin position="10"/>
        <end position="30"/>
    </location>
</feature>
<feature type="transmembrane region" description="Helical" evidence="1">
    <location>
        <begin position="66"/>
        <end position="86"/>
    </location>
</feature>
<feature type="transmembrane region" description="Helical" evidence="1">
    <location>
        <begin position="93"/>
        <end position="113"/>
    </location>
</feature>
<keyword id="KW-0997">Cell inner membrane</keyword>
<keyword id="KW-1003">Cell membrane</keyword>
<keyword id="KW-0472">Membrane</keyword>
<keyword id="KW-0520">NAD</keyword>
<keyword id="KW-0874">Quinone</keyword>
<keyword id="KW-1185">Reference proteome</keyword>
<keyword id="KW-1278">Translocase</keyword>
<keyword id="KW-0812">Transmembrane</keyword>
<keyword id="KW-1133">Transmembrane helix</keyword>
<keyword id="KW-0813">Transport</keyword>
<keyword id="KW-0830">Ubiquinone</keyword>
<organism>
    <name type="scientific">Pseudomonas aeruginosa (strain ATCC 15692 / DSM 22644 / CIP 104116 / JCM 14847 / LMG 12228 / 1C / PRS 101 / PAO1)</name>
    <dbReference type="NCBI Taxonomy" id="208964"/>
    <lineage>
        <taxon>Bacteria</taxon>
        <taxon>Pseudomonadati</taxon>
        <taxon>Pseudomonadota</taxon>
        <taxon>Gammaproteobacteria</taxon>
        <taxon>Pseudomonadales</taxon>
        <taxon>Pseudomonadaceae</taxon>
        <taxon>Pseudomonas</taxon>
    </lineage>
</organism>
<reference key="1">
    <citation type="journal article" date="2000" name="Nature">
        <title>Complete genome sequence of Pseudomonas aeruginosa PAO1, an opportunistic pathogen.</title>
        <authorList>
            <person name="Stover C.K."/>
            <person name="Pham X.-Q.T."/>
            <person name="Erwin A.L."/>
            <person name="Mizoguchi S.D."/>
            <person name="Warrener P."/>
            <person name="Hickey M.J."/>
            <person name="Brinkman F.S.L."/>
            <person name="Hufnagle W.O."/>
            <person name="Kowalik D.J."/>
            <person name="Lagrou M."/>
            <person name="Garber R.L."/>
            <person name="Goltry L."/>
            <person name="Tolentino E."/>
            <person name="Westbrock-Wadman S."/>
            <person name="Yuan Y."/>
            <person name="Brody L.L."/>
            <person name="Coulter S.N."/>
            <person name="Folger K.R."/>
            <person name="Kas A."/>
            <person name="Larbig K."/>
            <person name="Lim R.M."/>
            <person name="Smith K.A."/>
            <person name="Spencer D.H."/>
            <person name="Wong G.K.-S."/>
            <person name="Wu Z."/>
            <person name="Paulsen I.T."/>
            <person name="Reizer J."/>
            <person name="Saier M.H. Jr."/>
            <person name="Hancock R.E.W."/>
            <person name="Lory S."/>
            <person name="Olson M.V."/>
        </authorList>
    </citation>
    <scope>NUCLEOTIDE SEQUENCE [LARGE SCALE GENOMIC DNA]</scope>
    <source>
        <strain>ATCC 15692 / DSM 22644 / CIP 104116 / JCM 14847 / LMG 12228 / 1C / PRS 101 / PAO1</strain>
    </source>
</reference>
<proteinExistence type="inferred from homology"/>
<dbReference type="EC" id="7.1.1.-" evidence="1"/>
<dbReference type="EMBL" id="AE004091">
    <property type="protein sequence ID" value="AAG05272.1"/>
    <property type="molecule type" value="Genomic_DNA"/>
</dbReference>
<dbReference type="PIR" id="D83410">
    <property type="entry name" value="D83410"/>
</dbReference>
<dbReference type="RefSeq" id="NP_250574.1">
    <property type="nucleotide sequence ID" value="NC_002516.2"/>
</dbReference>
<dbReference type="SMR" id="Q9I2L4"/>
<dbReference type="STRING" id="208964.PA1883"/>
<dbReference type="PaxDb" id="208964-PA1883"/>
<dbReference type="DNASU" id="881501"/>
<dbReference type="GeneID" id="881501"/>
<dbReference type="KEGG" id="pae:PA1883"/>
<dbReference type="PATRIC" id="fig|208964.12.peg.1960"/>
<dbReference type="PseudoCAP" id="PA1883"/>
<dbReference type="HOGENOM" id="CLU_119549_2_1_6"/>
<dbReference type="InParanoid" id="Q9I2L4"/>
<dbReference type="OrthoDB" id="9791970at2"/>
<dbReference type="PhylomeDB" id="Q9I2L4"/>
<dbReference type="BioCyc" id="PAER208964:G1FZ6-1923-MONOMER"/>
<dbReference type="Proteomes" id="UP000002438">
    <property type="component" value="Chromosome"/>
</dbReference>
<dbReference type="GO" id="GO:0005886">
    <property type="term" value="C:plasma membrane"/>
    <property type="evidence" value="ECO:0007669"/>
    <property type="project" value="UniProtKB-SubCell"/>
</dbReference>
<dbReference type="GO" id="GO:0045271">
    <property type="term" value="C:respiratory chain complex I"/>
    <property type="evidence" value="ECO:0000318"/>
    <property type="project" value="GO_Central"/>
</dbReference>
<dbReference type="GO" id="GO:0008137">
    <property type="term" value="F:NADH dehydrogenase (ubiquinone) activity"/>
    <property type="evidence" value="ECO:0000318"/>
    <property type="project" value="GO_Central"/>
</dbReference>
<dbReference type="GO" id="GO:0050136">
    <property type="term" value="F:NADH:ubiquinone reductase (non-electrogenic) activity"/>
    <property type="evidence" value="ECO:0007669"/>
    <property type="project" value="UniProtKB-UniRule"/>
</dbReference>
<dbReference type="GO" id="GO:0048038">
    <property type="term" value="F:quinone binding"/>
    <property type="evidence" value="ECO:0007669"/>
    <property type="project" value="UniProtKB-KW"/>
</dbReference>
<dbReference type="FunFam" id="1.20.58.1610:FF:000003">
    <property type="entry name" value="NADH-quinone oxidoreductase subunit A"/>
    <property type="match status" value="1"/>
</dbReference>
<dbReference type="Gene3D" id="1.20.58.1610">
    <property type="entry name" value="NADH:ubiquinone/plastoquinone oxidoreductase, chain 3"/>
    <property type="match status" value="1"/>
</dbReference>
<dbReference type="HAMAP" id="MF_01394">
    <property type="entry name" value="NDH1_NuoA"/>
    <property type="match status" value="1"/>
</dbReference>
<dbReference type="InterPro" id="IPR023043">
    <property type="entry name" value="NAD(P)H_OxRDtase_bac/plastid"/>
</dbReference>
<dbReference type="InterPro" id="IPR000440">
    <property type="entry name" value="NADH_UbQ/plastoQ_OxRdtase_su3"/>
</dbReference>
<dbReference type="InterPro" id="IPR038430">
    <property type="entry name" value="NDAH_ubi_oxred_su3_sf"/>
</dbReference>
<dbReference type="PANTHER" id="PTHR11058:SF21">
    <property type="entry name" value="NADH-QUINONE OXIDOREDUCTASE SUBUNIT A"/>
    <property type="match status" value="1"/>
</dbReference>
<dbReference type="PANTHER" id="PTHR11058">
    <property type="entry name" value="NADH-UBIQUINONE OXIDOREDUCTASE CHAIN 3"/>
    <property type="match status" value="1"/>
</dbReference>
<dbReference type="Pfam" id="PF00507">
    <property type="entry name" value="Oxidored_q4"/>
    <property type="match status" value="1"/>
</dbReference>
<accession>Q9I2L4</accession>
<sequence>MYASFAPATWALLAYLFGALALCLLMLGLGRVLGGRSHGRAKNLPFESGVDSTGSSRLRFSVKYALVAMLFVIFGIEMPFLYLWAVSLRENGWAGFVEATLFVSLLLVGLFYLHRVGALDWSPERRRKKPHD</sequence>
<evidence type="ECO:0000255" key="1">
    <source>
        <dbReference type="HAMAP-Rule" id="MF_01394"/>
    </source>
</evidence>
<comment type="function">
    <text evidence="1">NDH-1 shuttles electrons from NADH, via FMN and iron-sulfur (Fe-S) centers, to quinones in the respiratory chain. The immediate electron acceptor for the enzyme in this species is believed to be ubiquinone. Couples the redox reaction to proton translocation (for every two electrons transferred, four hydrogen ions are translocated across the cytoplasmic membrane), and thus conserves the redox energy in a proton gradient.</text>
</comment>
<comment type="catalytic activity">
    <reaction evidence="1">
        <text>a quinone + NADH + 5 H(+)(in) = a quinol + NAD(+) + 4 H(+)(out)</text>
        <dbReference type="Rhea" id="RHEA:57888"/>
        <dbReference type="ChEBI" id="CHEBI:15378"/>
        <dbReference type="ChEBI" id="CHEBI:24646"/>
        <dbReference type="ChEBI" id="CHEBI:57540"/>
        <dbReference type="ChEBI" id="CHEBI:57945"/>
        <dbReference type="ChEBI" id="CHEBI:132124"/>
    </reaction>
</comment>
<comment type="subunit">
    <text evidence="1">NDH-1 is composed of 13 different subunits. Subunits NuoA, H, J, K, L, M, N constitute the membrane sector of the complex.</text>
</comment>
<comment type="subcellular location">
    <subcellularLocation>
        <location evidence="1">Cell inner membrane</location>
        <topology evidence="1">Multi-pass membrane protein</topology>
    </subcellularLocation>
</comment>
<comment type="similarity">
    <text evidence="1">Belongs to the complex I subunit 3 family.</text>
</comment>